<keyword id="KW-0028">Amino-acid biosynthesis</keyword>
<keyword id="KW-0055">Arginine biosynthesis</keyword>
<keyword id="KW-0963">Cytoplasm</keyword>
<keyword id="KW-0521">NADP</keyword>
<keyword id="KW-0560">Oxidoreductase</keyword>
<keyword id="KW-1185">Reference proteome</keyword>
<accession>A6L849</accession>
<comment type="function">
    <text evidence="1">Catalyzes the NADPH-dependent reduction of N-acetyl-5-glutamyl phosphate to yield N-acetyl-L-glutamate 5-semialdehyde.</text>
</comment>
<comment type="catalytic activity">
    <reaction evidence="1">
        <text>N-acetyl-L-glutamate 5-semialdehyde + phosphate + NADP(+) = N-acetyl-L-glutamyl 5-phosphate + NADPH + H(+)</text>
        <dbReference type="Rhea" id="RHEA:21588"/>
        <dbReference type="ChEBI" id="CHEBI:15378"/>
        <dbReference type="ChEBI" id="CHEBI:29123"/>
        <dbReference type="ChEBI" id="CHEBI:43474"/>
        <dbReference type="ChEBI" id="CHEBI:57783"/>
        <dbReference type="ChEBI" id="CHEBI:57936"/>
        <dbReference type="ChEBI" id="CHEBI:58349"/>
        <dbReference type="EC" id="1.2.1.38"/>
    </reaction>
</comment>
<comment type="pathway">
    <text evidence="1">Amino-acid biosynthesis; L-arginine biosynthesis; N(2)-acetyl-L-ornithine from L-glutamate: step 3/4.</text>
</comment>
<comment type="subcellular location">
    <subcellularLocation>
        <location evidence="1">Cytoplasm</location>
    </subcellularLocation>
</comment>
<comment type="similarity">
    <text evidence="1">Belongs to the NAGSA dehydrogenase family. Type 1 subfamily.</text>
</comment>
<sequence length="322" mass="35979">MIKCGIIGGAGYTAGELIRLLLNHPDAELTFINSSSNAGNKITDVHGGLYGETDLVFTSELPLDSIDLLFFCTAHGDTKKFMENHTVPENVKIIDLSMDYRIEGPEHDFVYGLPELNRRRICNARHIANPGCFATCIQLGVLPLAKHLMLNSDLHVNAITGSTGAGVKPSSTSHFSWRNDNISIYKPFTHQHLAEINQSLSQLQKSYSSRINFIPVRGNFSRGIFATTYIDCKIDLVEIRRIYEEYYDDHSFTFITDKNPDLKQVVNTNKCLIHLQKIDDKLLIISMIDNLLKGASGQAVHNMNLLFGLEETVGLHLKPSAF</sequence>
<reference key="1">
    <citation type="journal article" date="2007" name="PLoS Biol.">
        <title>Evolution of symbiotic bacteria in the distal human intestine.</title>
        <authorList>
            <person name="Xu J."/>
            <person name="Mahowald M.A."/>
            <person name="Ley R.E."/>
            <person name="Lozupone C.A."/>
            <person name="Hamady M."/>
            <person name="Martens E.C."/>
            <person name="Henrissat B."/>
            <person name="Coutinho P.M."/>
            <person name="Minx P."/>
            <person name="Latreille P."/>
            <person name="Cordum H."/>
            <person name="Van Brunt A."/>
            <person name="Kim K."/>
            <person name="Fulton R.S."/>
            <person name="Fulton L.A."/>
            <person name="Clifton S.W."/>
            <person name="Wilson R.K."/>
            <person name="Knight R.D."/>
            <person name="Gordon J.I."/>
        </authorList>
    </citation>
    <scope>NUCLEOTIDE SEQUENCE [LARGE SCALE GENOMIC DNA]</scope>
    <source>
        <strain>ATCC 8503 / DSM 20701 / CIP 104284 / JCM 5825 / NCTC 11152</strain>
    </source>
</reference>
<feature type="chain" id="PRO_1000011027" description="N-acetyl-gamma-glutamyl-phosphate reductase">
    <location>
        <begin position="1"/>
        <end position="322"/>
    </location>
</feature>
<feature type="active site" evidence="1">
    <location>
        <position position="132"/>
    </location>
</feature>
<name>ARGC_PARD8</name>
<gene>
    <name evidence="1" type="primary">argC</name>
    <name type="ordered locus">BDI_0068</name>
</gene>
<organism>
    <name type="scientific">Parabacteroides distasonis (strain ATCC 8503 / DSM 20701 / CIP 104284 / JCM 5825 / NCTC 11152)</name>
    <dbReference type="NCBI Taxonomy" id="435591"/>
    <lineage>
        <taxon>Bacteria</taxon>
        <taxon>Pseudomonadati</taxon>
        <taxon>Bacteroidota</taxon>
        <taxon>Bacteroidia</taxon>
        <taxon>Bacteroidales</taxon>
        <taxon>Tannerellaceae</taxon>
        <taxon>Parabacteroides</taxon>
    </lineage>
</organism>
<evidence type="ECO:0000255" key="1">
    <source>
        <dbReference type="HAMAP-Rule" id="MF_00150"/>
    </source>
</evidence>
<dbReference type="EC" id="1.2.1.38" evidence="1"/>
<dbReference type="EMBL" id="CP000140">
    <property type="protein sequence ID" value="ABR41863.1"/>
    <property type="molecule type" value="Genomic_DNA"/>
</dbReference>
<dbReference type="RefSeq" id="WP_009276801.1">
    <property type="nucleotide sequence ID" value="NC_009615.1"/>
</dbReference>
<dbReference type="SMR" id="A6L849"/>
<dbReference type="STRING" id="435591.BDI_0068"/>
<dbReference type="PaxDb" id="435591-BDI_0068"/>
<dbReference type="KEGG" id="pdi:BDI_0068"/>
<dbReference type="eggNOG" id="COG0002">
    <property type="taxonomic scope" value="Bacteria"/>
</dbReference>
<dbReference type="HOGENOM" id="CLU_006384_0_1_10"/>
<dbReference type="BioCyc" id="PDIS435591:G1G5A-68-MONOMER"/>
<dbReference type="UniPathway" id="UPA00068">
    <property type="reaction ID" value="UER00108"/>
</dbReference>
<dbReference type="Proteomes" id="UP000000566">
    <property type="component" value="Chromosome"/>
</dbReference>
<dbReference type="GO" id="GO:0005737">
    <property type="term" value="C:cytoplasm"/>
    <property type="evidence" value="ECO:0007669"/>
    <property type="project" value="UniProtKB-SubCell"/>
</dbReference>
<dbReference type="GO" id="GO:0003942">
    <property type="term" value="F:N-acetyl-gamma-glutamyl-phosphate reductase activity"/>
    <property type="evidence" value="ECO:0007669"/>
    <property type="project" value="UniProtKB-UniRule"/>
</dbReference>
<dbReference type="GO" id="GO:0051287">
    <property type="term" value="F:NAD binding"/>
    <property type="evidence" value="ECO:0007669"/>
    <property type="project" value="InterPro"/>
</dbReference>
<dbReference type="GO" id="GO:0070401">
    <property type="term" value="F:NADP+ binding"/>
    <property type="evidence" value="ECO:0007669"/>
    <property type="project" value="InterPro"/>
</dbReference>
<dbReference type="GO" id="GO:0006526">
    <property type="term" value="P:L-arginine biosynthetic process"/>
    <property type="evidence" value="ECO:0007669"/>
    <property type="project" value="UniProtKB-UniRule"/>
</dbReference>
<dbReference type="CDD" id="cd23934">
    <property type="entry name" value="AGPR_1_C"/>
    <property type="match status" value="1"/>
</dbReference>
<dbReference type="CDD" id="cd17895">
    <property type="entry name" value="AGPR_1_N"/>
    <property type="match status" value="1"/>
</dbReference>
<dbReference type="Gene3D" id="3.30.360.10">
    <property type="entry name" value="Dihydrodipicolinate Reductase, domain 2"/>
    <property type="match status" value="1"/>
</dbReference>
<dbReference type="Gene3D" id="3.40.50.720">
    <property type="entry name" value="NAD(P)-binding Rossmann-like Domain"/>
    <property type="match status" value="1"/>
</dbReference>
<dbReference type="HAMAP" id="MF_00150">
    <property type="entry name" value="ArgC_type1"/>
    <property type="match status" value="1"/>
</dbReference>
<dbReference type="InterPro" id="IPR023013">
    <property type="entry name" value="AGPR_AS"/>
</dbReference>
<dbReference type="InterPro" id="IPR000706">
    <property type="entry name" value="AGPR_type-1"/>
</dbReference>
<dbReference type="InterPro" id="IPR036291">
    <property type="entry name" value="NAD(P)-bd_dom_sf"/>
</dbReference>
<dbReference type="InterPro" id="IPR050085">
    <property type="entry name" value="NAGSA_dehydrogenase"/>
</dbReference>
<dbReference type="InterPro" id="IPR000534">
    <property type="entry name" value="Semialdehyde_DH_NAD-bd"/>
</dbReference>
<dbReference type="NCBIfam" id="TIGR01850">
    <property type="entry name" value="argC"/>
    <property type="match status" value="1"/>
</dbReference>
<dbReference type="PANTHER" id="PTHR32338:SF10">
    <property type="entry name" value="N-ACETYL-GAMMA-GLUTAMYL-PHOSPHATE REDUCTASE, CHLOROPLASTIC-RELATED"/>
    <property type="match status" value="1"/>
</dbReference>
<dbReference type="PANTHER" id="PTHR32338">
    <property type="entry name" value="N-ACETYL-GAMMA-GLUTAMYL-PHOSPHATE REDUCTASE, CHLOROPLASTIC-RELATED-RELATED"/>
    <property type="match status" value="1"/>
</dbReference>
<dbReference type="Pfam" id="PF01118">
    <property type="entry name" value="Semialdhyde_dh"/>
    <property type="match status" value="1"/>
</dbReference>
<dbReference type="Pfam" id="PF22698">
    <property type="entry name" value="Semialdhyde_dhC_1"/>
    <property type="match status" value="1"/>
</dbReference>
<dbReference type="SMART" id="SM00859">
    <property type="entry name" value="Semialdhyde_dh"/>
    <property type="match status" value="1"/>
</dbReference>
<dbReference type="SUPFAM" id="SSF55347">
    <property type="entry name" value="Glyceraldehyde-3-phosphate dehydrogenase-like, C-terminal domain"/>
    <property type="match status" value="1"/>
</dbReference>
<dbReference type="SUPFAM" id="SSF51735">
    <property type="entry name" value="NAD(P)-binding Rossmann-fold domains"/>
    <property type="match status" value="1"/>
</dbReference>
<dbReference type="PROSITE" id="PS01224">
    <property type="entry name" value="ARGC"/>
    <property type="match status" value="1"/>
</dbReference>
<proteinExistence type="inferred from homology"/>
<protein>
    <recommendedName>
        <fullName evidence="1">N-acetyl-gamma-glutamyl-phosphate reductase</fullName>
        <shortName evidence="1">AGPR</shortName>
        <ecNumber evidence="1">1.2.1.38</ecNumber>
    </recommendedName>
    <alternativeName>
        <fullName evidence="1">N-acetyl-glutamate semialdehyde dehydrogenase</fullName>
        <shortName evidence="1">NAGSA dehydrogenase</shortName>
    </alternativeName>
</protein>